<keyword id="KW-0963">Cytoplasm</keyword>
<keyword id="KW-0460">Magnesium</keyword>
<keyword id="KW-0479">Metal-binding</keyword>
<keyword id="KW-0566">Pantothenate biosynthesis</keyword>
<keyword id="KW-0808">Transferase</keyword>
<reference key="1">
    <citation type="journal article" date="2006" name="J. Bacteriol.">
        <title>Complete genome sequence of Yersinia pestis strains Antiqua and Nepal516: evidence of gene reduction in an emerging pathogen.</title>
        <authorList>
            <person name="Chain P.S.G."/>
            <person name="Hu P."/>
            <person name="Malfatti S.A."/>
            <person name="Radnedge L."/>
            <person name="Larimer F."/>
            <person name="Vergez L.M."/>
            <person name="Worsham P."/>
            <person name="Chu M.C."/>
            <person name="Andersen G.L."/>
        </authorList>
    </citation>
    <scope>NUCLEOTIDE SEQUENCE [LARGE SCALE GENOMIC DNA]</scope>
    <source>
        <strain>Nepal516</strain>
    </source>
</reference>
<reference key="2">
    <citation type="submission" date="2009-04" db="EMBL/GenBank/DDBJ databases">
        <title>Yersinia pestis Nepal516A whole genome shotgun sequencing project.</title>
        <authorList>
            <person name="Plunkett G. III"/>
            <person name="Anderson B.D."/>
            <person name="Baumler D.J."/>
            <person name="Burland V."/>
            <person name="Cabot E.L."/>
            <person name="Glasner J.D."/>
            <person name="Mau B."/>
            <person name="Neeno-Eckwall E."/>
            <person name="Perna N.T."/>
            <person name="Munk A.C."/>
            <person name="Tapia R."/>
            <person name="Green L.D."/>
            <person name="Rogers Y.C."/>
            <person name="Detter J.C."/>
            <person name="Bruce D.C."/>
            <person name="Brettin T.S."/>
        </authorList>
    </citation>
    <scope>NUCLEOTIDE SEQUENCE [LARGE SCALE GENOMIC DNA]</scope>
    <source>
        <strain>Nepal516</strain>
    </source>
</reference>
<gene>
    <name evidence="1" type="primary">panB</name>
    <name type="ordered locus">YPN_0688</name>
    <name type="ORF">YP516_0732</name>
</gene>
<accession>Q1CLW0</accession>
<accession>C4GQ54</accession>
<feature type="chain" id="PRO_0000297416" description="3-methyl-2-oxobutanoate hydroxymethyltransferase">
    <location>
        <begin position="1"/>
        <end position="265"/>
    </location>
</feature>
<feature type="active site" description="Proton acceptor" evidence="1">
    <location>
        <position position="181"/>
    </location>
</feature>
<feature type="binding site" evidence="1">
    <location>
        <begin position="45"/>
        <end position="46"/>
    </location>
    <ligand>
        <name>3-methyl-2-oxobutanoate</name>
        <dbReference type="ChEBI" id="CHEBI:11851"/>
    </ligand>
</feature>
<feature type="binding site" evidence="1">
    <location>
        <position position="45"/>
    </location>
    <ligand>
        <name>Mg(2+)</name>
        <dbReference type="ChEBI" id="CHEBI:18420"/>
    </ligand>
</feature>
<feature type="binding site" evidence="1">
    <location>
        <position position="84"/>
    </location>
    <ligand>
        <name>3-methyl-2-oxobutanoate</name>
        <dbReference type="ChEBI" id="CHEBI:11851"/>
    </ligand>
</feature>
<feature type="binding site" evidence="1">
    <location>
        <position position="84"/>
    </location>
    <ligand>
        <name>Mg(2+)</name>
        <dbReference type="ChEBI" id="CHEBI:18420"/>
    </ligand>
</feature>
<feature type="binding site" evidence="1">
    <location>
        <position position="112"/>
    </location>
    <ligand>
        <name>3-methyl-2-oxobutanoate</name>
        <dbReference type="ChEBI" id="CHEBI:11851"/>
    </ligand>
</feature>
<feature type="binding site" evidence="1">
    <location>
        <position position="114"/>
    </location>
    <ligand>
        <name>Mg(2+)</name>
        <dbReference type="ChEBI" id="CHEBI:18420"/>
    </ligand>
</feature>
<sequence>MKTTTMSQLRQWKQEKRKFATLTAYDASFAQLFAEQGIQVLLVGDSLGMTLQGFDSTLPVTVADMAYHTRAVRRGAPHCLLLADMPFMSYATPELAFTHAAELMRAGANMVKLEGGSWLCDTIRMLAERAVPVCGHLGLTPQSVNIFGGYKVQGREEVAANQLLQDAIALEQAGAQLLVLECVPVELAQRVTEELTIPVIGIGAGNVTDGQILVMHDALGITGGHTPKFSKNFLAHSAGDIRAAIKLYIEEVEGGIYPAEEHTFQ</sequence>
<name>PANB_YERPN</name>
<evidence type="ECO:0000255" key="1">
    <source>
        <dbReference type="HAMAP-Rule" id="MF_00156"/>
    </source>
</evidence>
<comment type="function">
    <text evidence="1">Catalyzes the reversible reaction in which hydroxymethyl group from 5,10-methylenetetrahydrofolate is transferred onto alpha-ketoisovalerate to form ketopantoate.</text>
</comment>
<comment type="catalytic activity">
    <reaction evidence="1">
        <text>3-methyl-2-oxobutanoate + (6R)-5,10-methylene-5,6,7,8-tetrahydrofolate + H2O = 2-dehydropantoate + (6S)-5,6,7,8-tetrahydrofolate</text>
        <dbReference type="Rhea" id="RHEA:11824"/>
        <dbReference type="ChEBI" id="CHEBI:11561"/>
        <dbReference type="ChEBI" id="CHEBI:11851"/>
        <dbReference type="ChEBI" id="CHEBI:15377"/>
        <dbReference type="ChEBI" id="CHEBI:15636"/>
        <dbReference type="ChEBI" id="CHEBI:57453"/>
        <dbReference type="EC" id="2.1.2.11"/>
    </reaction>
</comment>
<comment type="cofactor">
    <cofactor evidence="1">
        <name>Mg(2+)</name>
        <dbReference type="ChEBI" id="CHEBI:18420"/>
    </cofactor>
    <text evidence="1">Binds 1 Mg(2+) ion per subunit.</text>
</comment>
<comment type="pathway">
    <text evidence="1">Cofactor biosynthesis; (R)-pantothenate biosynthesis; (R)-pantoate from 3-methyl-2-oxobutanoate: step 1/2.</text>
</comment>
<comment type="subunit">
    <text evidence="1">Homodecamer; pentamer of dimers.</text>
</comment>
<comment type="subcellular location">
    <subcellularLocation>
        <location evidence="1">Cytoplasm</location>
    </subcellularLocation>
</comment>
<comment type="similarity">
    <text evidence="1">Belongs to the PanB family.</text>
</comment>
<dbReference type="EC" id="2.1.2.11" evidence="1"/>
<dbReference type="EMBL" id="CP000305">
    <property type="protein sequence ID" value="ABG17020.1"/>
    <property type="molecule type" value="Genomic_DNA"/>
</dbReference>
<dbReference type="EMBL" id="ACNQ01000007">
    <property type="protein sequence ID" value="EEO77880.1"/>
    <property type="molecule type" value="Genomic_DNA"/>
</dbReference>
<dbReference type="RefSeq" id="WP_002209349.1">
    <property type="nucleotide sequence ID" value="NZ_ACNQ01000007.1"/>
</dbReference>
<dbReference type="SMR" id="Q1CLW0"/>
<dbReference type="GeneID" id="57975308"/>
<dbReference type="KEGG" id="ypn:YPN_0688"/>
<dbReference type="HOGENOM" id="CLU_036645_1_0_6"/>
<dbReference type="UniPathway" id="UPA00028">
    <property type="reaction ID" value="UER00003"/>
</dbReference>
<dbReference type="Proteomes" id="UP000008936">
    <property type="component" value="Chromosome"/>
</dbReference>
<dbReference type="GO" id="GO:0005737">
    <property type="term" value="C:cytoplasm"/>
    <property type="evidence" value="ECO:0007669"/>
    <property type="project" value="UniProtKB-SubCell"/>
</dbReference>
<dbReference type="GO" id="GO:0003864">
    <property type="term" value="F:3-methyl-2-oxobutanoate hydroxymethyltransferase activity"/>
    <property type="evidence" value="ECO:0007669"/>
    <property type="project" value="UniProtKB-UniRule"/>
</dbReference>
<dbReference type="GO" id="GO:0000287">
    <property type="term" value="F:magnesium ion binding"/>
    <property type="evidence" value="ECO:0007669"/>
    <property type="project" value="TreeGrafter"/>
</dbReference>
<dbReference type="GO" id="GO:0015940">
    <property type="term" value="P:pantothenate biosynthetic process"/>
    <property type="evidence" value="ECO:0007669"/>
    <property type="project" value="UniProtKB-UniRule"/>
</dbReference>
<dbReference type="CDD" id="cd06557">
    <property type="entry name" value="KPHMT-like"/>
    <property type="match status" value="1"/>
</dbReference>
<dbReference type="FunFam" id="3.20.20.60:FF:000003">
    <property type="entry name" value="3-methyl-2-oxobutanoate hydroxymethyltransferase"/>
    <property type="match status" value="1"/>
</dbReference>
<dbReference type="Gene3D" id="3.20.20.60">
    <property type="entry name" value="Phosphoenolpyruvate-binding domains"/>
    <property type="match status" value="1"/>
</dbReference>
<dbReference type="HAMAP" id="MF_00156">
    <property type="entry name" value="PanB"/>
    <property type="match status" value="1"/>
</dbReference>
<dbReference type="InterPro" id="IPR003700">
    <property type="entry name" value="Pantoate_hydroxy_MeTrfase"/>
</dbReference>
<dbReference type="InterPro" id="IPR015813">
    <property type="entry name" value="Pyrv/PenolPyrv_kinase-like_dom"/>
</dbReference>
<dbReference type="InterPro" id="IPR040442">
    <property type="entry name" value="Pyrv_kinase-like_dom_sf"/>
</dbReference>
<dbReference type="NCBIfam" id="TIGR00222">
    <property type="entry name" value="panB"/>
    <property type="match status" value="1"/>
</dbReference>
<dbReference type="NCBIfam" id="NF001452">
    <property type="entry name" value="PRK00311.1"/>
    <property type="match status" value="1"/>
</dbReference>
<dbReference type="PANTHER" id="PTHR20881">
    <property type="entry name" value="3-METHYL-2-OXOBUTANOATE HYDROXYMETHYLTRANSFERASE"/>
    <property type="match status" value="1"/>
</dbReference>
<dbReference type="PANTHER" id="PTHR20881:SF0">
    <property type="entry name" value="3-METHYL-2-OXOBUTANOATE HYDROXYMETHYLTRANSFERASE"/>
    <property type="match status" value="1"/>
</dbReference>
<dbReference type="Pfam" id="PF02548">
    <property type="entry name" value="Pantoate_transf"/>
    <property type="match status" value="1"/>
</dbReference>
<dbReference type="PIRSF" id="PIRSF000388">
    <property type="entry name" value="Pantoate_hydroxy_MeTrfase"/>
    <property type="match status" value="1"/>
</dbReference>
<dbReference type="SUPFAM" id="SSF51621">
    <property type="entry name" value="Phosphoenolpyruvate/pyruvate domain"/>
    <property type="match status" value="1"/>
</dbReference>
<proteinExistence type="inferred from homology"/>
<organism>
    <name type="scientific">Yersinia pestis bv. Antiqua (strain Nepal516)</name>
    <dbReference type="NCBI Taxonomy" id="377628"/>
    <lineage>
        <taxon>Bacteria</taxon>
        <taxon>Pseudomonadati</taxon>
        <taxon>Pseudomonadota</taxon>
        <taxon>Gammaproteobacteria</taxon>
        <taxon>Enterobacterales</taxon>
        <taxon>Yersiniaceae</taxon>
        <taxon>Yersinia</taxon>
    </lineage>
</organism>
<protein>
    <recommendedName>
        <fullName evidence="1">3-methyl-2-oxobutanoate hydroxymethyltransferase</fullName>
        <ecNumber evidence="1">2.1.2.11</ecNumber>
    </recommendedName>
    <alternativeName>
        <fullName evidence="1">Ketopantoate hydroxymethyltransferase</fullName>
        <shortName evidence="1">KPHMT</shortName>
    </alternativeName>
</protein>